<name>FBX28_HUMAN</name>
<proteinExistence type="evidence at protein level"/>
<reference key="1">
    <citation type="journal article" date="2004" name="Nat. Genet.">
        <title>Complete sequencing and characterization of 21,243 full-length human cDNAs.</title>
        <authorList>
            <person name="Ota T."/>
            <person name="Suzuki Y."/>
            <person name="Nishikawa T."/>
            <person name="Otsuki T."/>
            <person name="Sugiyama T."/>
            <person name="Irie R."/>
            <person name="Wakamatsu A."/>
            <person name="Hayashi K."/>
            <person name="Sato H."/>
            <person name="Nagai K."/>
            <person name="Kimura K."/>
            <person name="Makita H."/>
            <person name="Sekine M."/>
            <person name="Obayashi M."/>
            <person name="Nishi T."/>
            <person name="Shibahara T."/>
            <person name="Tanaka T."/>
            <person name="Ishii S."/>
            <person name="Yamamoto J."/>
            <person name="Saito K."/>
            <person name="Kawai Y."/>
            <person name="Isono Y."/>
            <person name="Nakamura Y."/>
            <person name="Nagahari K."/>
            <person name="Murakami K."/>
            <person name="Yasuda T."/>
            <person name="Iwayanagi T."/>
            <person name="Wagatsuma M."/>
            <person name="Shiratori A."/>
            <person name="Sudo H."/>
            <person name="Hosoiri T."/>
            <person name="Kaku Y."/>
            <person name="Kodaira H."/>
            <person name="Kondo H."/>
            <person name="Sugawara M."/>
            <person name="Takahashi M."/>
            <person name="Kanda K."/>
            <person name="Yokoi T."/>
            <person name="Furuya T."/>
            <person name="Kikkawa E."/>
            <person name="Omura Y."/>
            <person name="Abe K."/>
            <person name="Kamihara K."/>
            <person name="Katsuta N."/>
            <person name="Sato K."/>
            <person name="Tanikawa M."/>
            <person name="Yamazaki M."/>
            <person name="Ninomiya K."/>
            <person name="Ishibashi T."/>
            <person name="Yamashita H."/>
            <person name="Murakawa K."/>
            <person name="Fujimori K."/>
            <person name="Tanai H."/>
            <person name="Kimata M."/>
            <person name="Watanabe M."/>
            <person name="Hiraoka S."/>
            <person name="Chiba Y."/>
            <person name="Ishida S."/>
            <person name="Ono Y."/>
            <person name="Takiguchi S."/>
            <person name="Watanabe S."/>
            <person name="Yosida M."/>
            <person name="Hotuta T."/>
            <person name="Kusano J."/>
            <person name="Kanehori K."/>
            <person name="Takahashi-Fujii A."/>
            <person name="Hara H."/>
            <person name="Tanase T.-O."/>
            <person name="Nomura Y."/>
            <person name="Togiya S."/>
            <person name="Komai F."/>
            <person name="Hara R."/>
            <person name="Takeuchi K."/>
            <person name="Arita M."/>
            <person name="Imose N."/>
            <person name="Musashino K."/>
            <person name="Yuuki H."/>
            <person name="Oshima A."/>
            <person name="Sasaki N."/>
            <person name="Aotsuka S."/>
            <person name="Yoshikawa Y."/>
            <person name="Matsunawa H."/>
            <person name="Ichihara T."/>
            <person name="Shiohata N."/>
            <person name="Sano S."/>
            <person name="Moriya S."/>
            <person name="Momiyama H."/>
            <person name="Satoh N."/>
            <person name="Takami S."/>
            <person name="Terashima Y."/>
            <person name="Suzuki O."/>
            <person name="Nakagawa S."/>
            <person name="Senoh A."/>
            <person name="Mizoguchi H."/>
            <person name="Goto Y."/>
            <person name="Shimizu F."/>
            <person name="Wakebe H."/>
            <person name="Hishigaki H."/>
            <person name="Watanabe T."/>
            <person name="Sugiyama A."/>
            <person name="Takemoto M."/>
            <person name="Kawakami B."/>
            <person name="Yamazaki M."/>
            <person name="Watanabe K."/>
            <person name="Kumagai A."/>
            <person name="Itakura S."/>
            <person name="Fukuzumi Y."/>
            <person name="Fujimori Y."/>
            <person name="Komiyama M."/>
            <person name="Tashiro H."/>
            <person name="Tanigami A."/>
            <person name="Fujiwara T."/>
            <person name="Ono T."/>
            <person name="Yamada K."/>
            <person name="Fujii Y."/>
            <person name="Ozaki K."/>
            <person name="Hirao M."/>
            <person name="Ohmori Y."/>
            <person name="Kawabata A."/>
            <person name="Hikiji T."/>
            <person name="Kobatake N."/>
            <person name="Inagaki H."/>
            <person name="Ikema Y."/>
            <person name="Okamoto S."/>
            <person name="Okitani R."/>
            <person name="Kawakami T."/>
            <person name="Noguchi S."/>
            <person name="Itoh T."/>
            <person name="Shigeta K."/>
            <person name="Senba T."/>
            <person name="Matsumura K."/>
            <person name="Nakajima Y."/>
            <person name="Mizuno T."/>
            <person name="Morinaga M."/>
            <person name="Sasaki M."/>
            <person name="Togashi T."/>
            <person name="Oyama M."/>
            <person name="Hata H."/>
            <person name="Watanabe M."/>
            <person name="Komatsu T."/>
            <person name="Mizushima-Sugano J."/>
            <person name="Satoh T."/>
            <person name="Shirai Y."/>
            <person name="Takahashi Y."/>
            <person name="Nakagawa K."/>
            <person name="Okumura K."/>
            <person name="Nagase T."/>
            <person name="Nomura N."/>
            <person name="Kikuchi H."/>
            <person name="Masuho Y."/>
            <person name="Yamashita R."/>
            <person name="Nakai K."/>
            <person name="Yada T."/>
            <person name="Nakamura Y."/>
            <person name="Ohara O."/>
            <person name="Isogai T."/>
            <person name="Sugano S."/>
        </authorList>
    </citation>
    <scope>NUCLEOTIDE SEQUENCE [LARGE SCALE MRNA] (ISOFORM 1)</scope>
</reference>
<reference key="2">
    <citation type="journal article" date="2006" name="Nature">
        <title>The DNA sequence and biological annotation of human chromosome 1.</title>
        <authorList>
            <person name="Gregory S.G."/>
            <person name="Barlow K.F."/>
            <person name="McLay K.E."/>
            <person name="Kaul R."/>
            <person name="Swarbreck D."/>
            <person name="Dunham A."/>
            <person name="Scott C.E."/>
            <person name="Howe K.L."/>
            <person name="Woodfine K."/>
            <person name="Spencer C.C.A."/>
            <person name="Jones M.C."/>
            <person name="Gillson C."/>
            <person name="Searle S."/>
            <person name="Zhou Y."/>
            <person name="Kokocinski F."/>
            <person name="McDonald L."/>
            <person name="Evans R."/>
            <person name="Phillips K."/>
            <person name="Atkinson A."/>
            <person name="Cooper R."/>
            <person name="Jones C."/>
            <person name="Hall R.E."/>
            <person name="Andrews T.D."/>
            <person name="Lloyd C."/>
            <person name="Ainscough R."/>
            <person name="Almeida J.P."/>
            <person name="Ambrose K.D."/>
            <person name="Anderson F."/>
            <person name="Andrew R.W."/>
            <person name="Ashwell R.I.S."/>
            <person name="Aubin K."/>
            <person name="Babbage A.K."/>
            <person name="Bagguley C.L."/>
            <person name="Bailey J."/>
            <person name="Beasley H."/>
            <person name="Bethel G."/>
            <person name="Bird C.P."/>
            <person name="Bray-Allen S."/>
            <person name="Brown J.Y."/>
            <person name="Brown A.J."/>
            <person name="Buckley D."/>
            <person name="Burton J."/>
            <person name="Bye J."/>
            <person name="Carder C."/>
            <person name="Chapman J.C."/>
            <person name="Clark S.Y."/>
            <person name="Clarke G."/>
            <person name="Clee C."/>
            <person name="Cobley V."/>
            <person name="Collier R.E."/>
            <person name="Corby N."/>
            <person name="Coville G.J."/>
            <person name="Davies J."/>
            <person name="Deadman R."/>
            <person name="Dunn M."/>
            <person name="Earthrowl M."/>
            <person name="Ellington A.G."/>
            <person name="Errington H."/>
            <person name="Frankish A."/>
            <person name="Frankland J."/>
            <person name="French L."/>
            <person name="Garner P."/>
            <person name="Garnett J."/>
            <person name="Gay L."/>
            <person name="Ghori M.R.J."/>
            <person name="Gibson R."/>
            <person name="Gilby L.M."/>
            <person name="Gillett W."/>
            <person name="Glithero R.J."/>
            <person name="Grafham D.V."/>
            <person name="Griffiths C."/>
            <person name="Griffiths-Jones S."/>
            <person name="Grocock R."/>
            <person name="Hammond S."/>
            <person name="Harrison E.S.I."/>
            <person name="Hart E."/>
            <person name="Haugen E."/>
            <person name="Heath P.D."/>
            <person name="Holmes S."/>
            <person name="Holt K."/>
            <person name="Howden P.J."/>
            <person name="Hunt A.R."/>
            <person name="Hunt S.E."/>
            <person name="Hunter G."/>
            <person name="Isherwood J."/>
            <person name="James R."/>
            <person name="Johnson C."/>
            <person name="Johnson D."/>
            <person name="Joy A."/>
            <person name="Kay M."/>
            <person name="Kershaw J.K."/>
            <person name="Kibukawa M."/>
            <person name="Kimberley A.M."/>
            <person name="King A."/>
            <person name="Knights A.J."/>
            <person name="Lad H."/>
            <person name="Laird G."/>
            <person name="Lawlor S."/>
            <person name="Leongamornlert D.A."/>
            <person name="Lloyd D.M."/>
            <person name="Loveland J."/>
            <person name="Lovell J."/>
            <person name="Lush M.J."/>
            <person name="Lyne R."/>
            <person name="Martin S."/>
            <person name="Mashreghi-Mohammadi M."/>
            <person name="Matthews L."/>
            <person name="Matthews N.S.W."/>
            <person name="McLaren S."/>
            <person name="Milne S."/>
            <person name="Mistry S."/>
            <person name="Moore M.J.F."/>
            <person name="Nickerson T."/>
            <person name="O'Dell C.N."/>
            <person name="Oliver K."/>
            <person name="Palmeiri A."/>
            <person name="Palmer S.A."/>
            <person name="Parker A."/>
            <person name="Patel D."/>
            <person name="Pearce A.V."/>
            <person name="Peck A.I."/>
            <person name="Pelan S."/>
            <person name="Phelps K."/>
            <person name="Phillimore B.J."/>
            <person name="Plumb R."/>
            <person name="Rajan J."/>
            <person name="Raymond C."/>
            <person name="Rouse G."/>
            <person name="Saenphimmachak C."/>
            <person name="Sehra H.K."/>
            <person name="Sheridan E."/>
            <person name="Shownkeen R."/>
            <person name="Sims S."/>
            <person name="Skuce C.D."/>
            <person name="Smith M."/>
            <person name="Steward C."/>
            <person name="Subramanian S."/>
            <person name="Sycamore N."/>
            <person name="Tracey A."/>
            <person name="Tromans A."/>
            <person name="Van Helmond Z."/>
            <person name="Wall M."/>
            <person name="Wallis J.M."/>
            <person name="White S."/>
            <person name="Whitehead S.L."/>
            <person name="Wilkinson J.E."/>
            <person name="Willey D.L."/>
            <person name="Williams H."/>
            <person name="Wilming L."/>
            <person name="Wray P.W."/>
            <person name="Wu Z."/>
            <person name="Coulson A."/>
            <person name="Vaudin M."/>
            <person name="Sulston J.E."/>
            <person name="Durbin R.M."/>
            <person name="Hubbard T."/>
            <person name="Wooster R."/>
            <person name="Dunham I."/>
            <person name="Carter N.P."/>
            <person name="McVean G."/>
            <person name="Ross M.T."/>
            <person name="Harrow J."/>
            <person name="Olson M.V."/>
            <person name="Beck S."/>
            <person name="Rogers J."/>
            <person name="Bentley D.R."/>
        </authorList>
    </citation>
    <scope>NUCLEOTIDE SEQUENCE [LARGE SCALE GENOMIC DNA]</scope>
</reference>
<reference key="3">
    <citation type="journal article" date="2004" name="Genome Res.">
        <title>The status, quality, and expansion of the NIH full-length cDNA project: the Mammalian Gene Collection (MGC).</title>
        <authorList>
            <consortium name="The MGC Project Team"/>
        </authorList>
    </citation>
    <scope>NUCLEOTIDE SEQUENCE [LARGE SCALE MRNA] (ISOFORM 1)</scope>
    <source>
        <tissue>Colon</tissue>
    </source>
</reference>
<reference key="4">
    <citation type="journal article" date="1997" name="DNA Res.">
        <title>Characterization of cDNA clones in size-fractionated cDNA libraries from human brain.</title>
        <authorList>
            <person name="Seki N."/>
            <person name="Ohira M."/>
            <person name="Nagase T."/>
            <person name="Ishikawa K."/>
            <person name="Miyajima N."/>
            <person name="Nakajima D."/>
            <person name="Nomura N."/>
            <person name="Ohara O."/>
        </authorList>
    </citation>
    <scope>NUCLEOTIDE SEQUENCE [LARGE SCALE MRNA] OF 70-368 (ISOFORM 1)</scope>
    <source>
        <tissue>Brain</tissue>
    </source>
</reference>
<reference key="5">
    <citation type="journal article" date="2006" name="Cell">
        <title>Global, in vivo, and site-specific phosphorylation dynamics in signaling networks.</title>
        <authorList>
            <person name="Olsen J.V."/>
            <person name="Blagoev B."/>
            <person name="Gnad F."/>
            <person name="Macek B."/>
            <person name="Kumar C."/>
            <person name="Mortensen P."/>
            <person name="Mann M."/>
        </authorList>
    </citation>
    <scope>PHOSPHORYLATION [LARGE SCALE ANALYSIS] AT SER-344</scope>
    <scope>IDENTIFICATION BY MASS SPECTROMETRY [LARGE SCALE ANALYSIS]</scope>
    <source>
        <tissue>Cervix carcinoma</tissue>
    </source>
</reference>
<reference key="6">
    <citation type="journal article" date="2008" name="Proc. Natl. Acad. Sci. U.S.A.">
        <title>A quantitative atlas of mitotic phosphorylation.</title>
        <authorList>
            <person name="Dephoure N."/>
            <person name="Zhou C."/>
            <person name="Villen J."/>
            <person name="Beausoleil S.A."/>
            <person name="Bakalarski C.E."/>
            <person name="Elledge S.J."/>
            <person name="Gygi S.P."/>
        </authorList>
    </citation>
    <scope>PHOSPHORYLATION [LARGE SCALE ANALYSIS] AT SER-235 AND SER-344</scope>
    <scope>IDENTIFICATION BY MASS SPECTROMETRY [LARGE SCALE ANALYSIS]</scope>
    <source>
        <tissue>Cervix carcinoma</tissue>
    </source>
</reference>
<reference key="7">
    <citation type="journal article" date="2009" name="Anal. Chem.">
        <title>Lys-N and trypsin cover complementary parts of the phosphoproteome in a refined SCX-based approach.</title>
        <authorList>
            <person name="Gauci S."/>
            <person name="Helbig A.O."/>
            <person name="Slijper M."/>
            <person name="Krijgsveld J."/>
            <person name="Heck A.J."/>
            <person name="Mohammed S."/>
        </authorList>
    </citation>
    <scope>IDENTIFICATION BY MASS SPECTROMETRY [LARGE SCALE ANALYSIS]</scope>
</reference>
<reference key="8">
    <citation type="journal article" date="2009" name="Sci. Signal.">
        <title>Quantitative phosphoproteomic analysis of T cell receptor signaling reveals system-wide modulation of protein-protein interactions.</title>
        <authorList>
            <person name="Mayya V."/>
            <person name="Lundgren D.H."/>
            <person name="Hwang S.-I."/>
            <person name="Rezaul K."/>
            <person name="Wu L."/>
            <person name="Eng J.K."/>
            <person name="Rodionov V."/>
            <person name="Han D.K."/>
        </authorList>
    </citation>
    <scope>PHOSPHORYLATION [LARGE SCALE ANALYSIS] AT SER-344</scope>
    <scope>IDENTIFICATION BY MASS SPECTROMETRY [LARGE SCALE ANALYSIS]</scope>
    <source>
        <tissue>Leukemic T-cell</tissue>
    </source>
</reference>
<reference key="9">
    <citation type="journal article" date="2010" name="Cell">
        <title>The protein composition of mitotic chromosomes determined using multiclassifier combinatorial proteomics.</title>
        <authorList>
            <person name="Ohta S."/>
            <person name="Bukowski-Wills J.C."/>
            <person name="Sanchez-Pulido L."/>
            <person name="Alves Fde L."/>
            <person name="Wood L."/>
            <person name="Chen Z.A."/>
            <person name="Platani M."/>
            <person name="Fischer L."/>
            <person name="Hudson D.F."/>
            <person name="Ponting C.P."/>
            <person name="Fukagawa T."/>
            <person name="Earnshaw W.C."/>
            <person name="Rappsilber J."/>
        </authorList>
    </citation>
    <scope>SUBCELLULAR LOCATION</scope>
</reference>
<reference key="10">
    <citation type="journal article" date="2010" name="Sci. Signal.">
        <title>Quantitative phosphoproteomics reveals widespread full phosphorylation site occupancy during mitosis.</title>
        <authorList>
            <person name="Olsen J.V."/>
            <person name="Vermeulen M."/>
            <person name="Santamaria A."/>
            <person name="Kumar C."/>
            <person name="Miller M.L."/>
            <person name="Jensen L.J."/>
            <person name="Gnad F."/>
            <person name="Cox J."/>
            <person name="Jensen T.S."/>
            <person name="Nigg E.A."/>
            <person name="Brunak S."/>
            <person name="Mann M."/>
        </authorList>
    </citation>
    <scope>PHOSPHORYLATION [LARGE SCALE ANALYSIS] AT SER-242; THR-270 AND SER-344</scope>
    <scope>IDENTIFICATION BY MASS SPECTROMETRY [LARGE SCALE ANALYSIS]</scope>
    <source>
        <tissue>Cervix carcinoma</tissue>
    </source>
</reference>
<reference key="11">
    <citation type="journal article" date="2011" name="Sci. Signal.">
        <title>System-wide temporal characterization of the proteome and phosphoproteome of human embryonic stem cell differentiation.</title>
        <authorList>
            <person name="Rigbolt K.T."/>
            <person name="Prokhorova T.A."/>
            <person name="Akimov V."/>
            <person name="Henningsen J."/>
            <person name="Johansen P.T."/>
            <person name="Kratchmarova I."/>
            <person name="Kassem M."/>
            <person name="Mann M."/>
            <person name="Olsen J.V."/>
            <person name="Blagoev B."/>
        </authorList>
    </citation>
    <scope>PHOSPHORYLATION [LARGE SCALE ANALYSIS] AT SER-344</scope>
    <scope>IDENTIFICATION BY MASS SPECTROMETRY [LARGE SCALE ANALYSIS]</scope>
</reference>
<reference key="12">
    <citation type="journal article" date="2013" name="J. Proteome Res.">
        <title>Toward a comprehensive characterization of a human cancer cell phosphoproteome.</title>
        <authorList>
            <person name="Zhou H."/>
            <person name="Di Palma S."/>
            <person name="Preisinger C."/>
            <person name="Peng M."/>
            <person name="Polat A.N."/>
            <person name="Heck A.J."/>
            <person name="Mohammed S."/>
        </authorList>
    </citation>
    <scope>PHOSPHORYLATION [LARGE SCALE ANALYSIS] AT SER-344</scope>
    <scope>IDENTIFICATION BY MASS SPECTROMETRY [LARGE SCALE ANALYSIS]</scope>
    <source>
        <tissue>Cervix carcinoma</tissue>
        <tissue>Erythroleukemia</tissue>
    </source>
</reference>
<reference key="13">
    <citation type="journal article" date="2011" name="Nature">
        <title>Exome sequencing identifies frequent mutation of the SWI/SNF complex gene PBRM1 in renal carcinoma.</title>
        <authorList>
            <person name="Varela I."/>
            <person name="Tarpey P."/>
            <person name="Raine K."/>
            <person name="Huang D."/>
            <person name="Ong C.K."/>
            <person name="Stephens P."/>
            <person name="Davies H."/>
            <person name="Jones D."/>
            <person name="Lin M.L."/>
            <person name="Teague J."/>
            <person name="Bignell G."/>
            <person name="Butler A."/>
            <person name="Cho J."/>
            <person name="Dalgliesh G.L."/>
            <person name="Galappaththige D."/>
            <person name="Greenman C."/>
            <person name="Hardy C."/>
            <person name="Jia M."/>
            <person name="Latimer C."/>
            <person name="Lau K.W."/>
            <person name="Marshall J."/>
            <person name="McLaren S."/>
            <person name="Menzies A."/>
            <person name="Mudie L."/>
            <person name="Stebbings L."/>
            <person name="Largaespada D.A."/>
            <person name="Wessels L.F.A."/>
            <person name="Richard S."/>
            <person name="Kahnoski R.J."/>
            <person name="Anema J."/>
            <person name="Tuveson D.A."/>
            <person name="Perez-Mancera P.A."/>
            <person name="Mustonen V."/>
            <person name="Fischer A."/>
            <person name="Adams D.J."/>
            <person name="Rust A."/>
            <person name="Chan-On W."/>
            <person name="Subimerb C."/>
            <person name="Dykema K."/>
            <person name="Furge K."/>
            <person name="Campbell P.J."/>
            <person name="Teh B.T."/>
            <person name="Stratton M.R."/>
            <person name="Futreal P.A."/>
        </authorList>
    </citation>
    <scope>VARIANT HIS-345</scope>
</reference>
<reference key="14">
    <citation type="journal article" date="2021" name="Epilepsia">
        <title>FBXO28 causes developmental and epileptic encephalopathy with profound intellectual disability.</title>
        <authorList>
            <person name="Schneider A.L."/>
            <person name="Myers C.T."/>
            <person name="Muir A.M."/>
            <person name="Calvert S."/>
            <person name="Basinger A."/>
            <person name="Perry M.S."/>
            <person name="Rodan L."/>
            <person name="Helbig K.L."/>
            <person name="Chambers C."/>
            <person name="Gorman K.M."/>
            <person name="King M.D."/>
            <person name="Donkervoort S."/>
            <person name="Soldatos A."/>
            <person name="Boennemann C.G."/>
            <person name="Spataro N."/>
            <person name="Gabau E."/>
            <person name="Arellano M."/>
            <person name="Cappuccio G."/>
            <person name="Brunetti-Pierri N."/>
            <person name="Rossignol E."/>
            <person name="Hamdan F.F."/>
            <person name="Michaud J.L."/>
            <person name="Balak C."/>
            <person name="Mefford H.C."/>
            <person name="Scheffer I.E."/>
        </authorList>
    </citation>
    <scope>VARIANTS DEE100 ARG-64; PRO-66; GLY-348; LEU-348 AND 360-LYS--LYS-368 DEL</scope>
    <scope>INVOLVEMENT IN DEE100</scope>
</reference>
<gene>
    <name type="primary">FBXO28</name>
    <name evidence="7" type="synonym">CENP-30</name>
    <name type="synonym">KIAA0483</name>
</gene>
<sequence>MAAAAEERMAEEGGGGQGDGGSSLASGSTQRQPPPPAPQHPQPGSQALPAPALAPDQLPQNNTLVALPIVAIENILSFMSYDEISQLRLVCKRMDLVCQRMLNQGFLKVERYHNLCQKQVKAQLPRRESERRNHSLARHADILAAVETRLSLLNMTFMKYVDSNLCCFIPGKVIDEIYRVLRYVNSTRAPQRAHEVLQELRDISSMAMEYFDEKIVPILKRKLPGSDVSGRLMGSPPVPGPSAALTTMQLFSKQNPSRQEVTKLQQQVKTNGAGVTVLRREISELRTKVQEQQKQLQDQDQKLLEQTQIIGEQNARLAELERKLREVMESAVGNSSGSGQNEESPRKRKKATEAIDSLRKSKRLRNRK</sequence>
<comment type="function">
    <text evidence="1">Probably recognizes and binds to some phosphorylated proteins and promotes their ubiquitination and degradation.</text>
</comment>
<comment type="subunit">
    <text evidence="1">Part of a SCF (SKP1-cullin-F-box) protein ligase complex.</text>
</comment>
<comment type="interaction">
    <interactant intactId="EBI-740282">
        <id>Q9NVF7</id>
    </interactant>
    <interactant intactId="EBI-747899">
        <id>Q8N302</id>
        <label>AGGF1</label>
    </interactant>
    <organismsDiffer>false</organismsDiffer>
    <experiments>3</experiments>
</comment>
<comment type="interaction">
    <interactant intactId="EBI-740282">
        <id>Q9NVF7</id>
    </interactant>
    <interactant intactId="EBI-2559016">
        <id>Q6NZI2</id>
        <label>CAVIN1</label>
    </interactant>
    <organismsDiffer>false</organismsDiffer>
    <experiments>5</experiments>
</comment>
<comment type="interaction">
    <interactant intactId="EBI-740282">
        <id>Q9NVF7</id>
    </interactant>
    <interactant intactId="EBI-11962928">
        <id>Q9UI47-2</id>
        <label>CTNNA3</label>
    </interactant>
    <organismsDiffer>false</organismsDiffer>
    <experiments>3</experiments>
</comment>
<comment type="interaction">
    <interactant intactId="EBI-740282">
        <id>Q9NVF7</id>
    </interactant>
    <interactant intactId="EBI-11748557">
        <id>Q9Y6C2-2</id>
        <label>EMILIN1</label>
    </interactant>
    <organismsDiffer>false</organismsDiffer>
    <experiments>3</experiments>
</comment>
<comment type="interaction">
    <interactant intactId="EBI-740282">
        <id>Q9NVF7</id>
    </interactant>
    <interactant intactId="EBI-3197883">
        <id>Q9NT22</id>
        <label>EMILIN3</label>
    </interactant>
    <organismsDiffer>false</organismsDiffer>
    <experiments>6</experiments>
</comment>
<comment type="interaction">
    <interactant intactId="EBI-740282">
        <id>Q9NVF7</id>
    </interactant>
    <interactant intactId="EBI-6251402">
        <id>Q9UPT5-1</id>
        <label>EXOC7</label>
    </interactant>
    <organismsDiffer>false</organismsDiffer>
    <experiments>3</experiments>
</comment>
<comment type="interaction">
    <interactant intactId="EBI-740282">
        <id>Q9NVF7</id>
    </interactant>
    <interactant intactId="EBI-740282">
        <id>Q9NVF7</id>
        <label>FBXO28</label>
    </interactant>
    <organismsDiffer>false</organismsDiffer>
    <experiments>3</experiments>
</comment>
<comment type="interaction">
    <interactant intactId="EBI-740282">
        <id>Q9NVF7</id>
    </interactant>
    <interactant intactId="EBI-746252">
        <id>Q96CN9</id>
        <label>GCC1</label>
    </interactant>
    <organismsDiffer>false</organismsDiffer>
    <experiments>3</experiments>
</comment>
<comment type="interaction">
    <interactant intactId="EBI-740282">
        <id>Q9NVF7</id>
    </interactant>
    <interactant intactId="EBI-618309">
        <id>Q08379</id>
        <label>GOLGA2</label>
    </interactant>
    <organismsDiffer>false</organismsDiffer>
    <experiments>7</experiments>
</comment>
<comment type="interaction">
    <interactant intactId="EBI-740282">
        <id>Q9NVF7</id>
    </interactant>
    <interactant intactId="EBI-5916454">
        <id>A6NEM1</id>
        <label>GOLGA6L9</label>
    </interactant>
    <organismsDiffer>false</organismsDiffer>
    <experiments>3</experiments>
</comment>
<comment type="interaction">
    <interactant intactId="EBI-740282">
        <id>Q9NVF7</id>
    </interactant>
    <interactant intactId="EBI-748420">
        <id>Q9NSC5</id>
        <label>HOMER3</label>
    </interactant>
    <organismsDiffer>false</organismsDiffer>
    <experiments>6</experiments>
</comment>
<comment type="interaction">
    <interactant intactId="EBI-740282">
        <id>Q9NVF7</id>
    </interactant>
    <interactant intactId="EBI-742388">
        <id>Q9H8W4</id>
        <label>PLEKHF2</label>
    </interactant>
    <organismsDiffer>false</organismsDiffer>
    <experiments>6</experiments>
</comment>
<comment type="interaction">
    <interactant intactId="EBI-740282">
        <id>Q9NVF7</id>
    </interactant>
    <interactant intactId="EBI-713832">
        <id>Q6P1K2</id>
        <label>PMF1</label>
    </interactant>
    <organismsDiffer>false</organismsDiffer>
    <experiments>4</experiments>
</comment>
<comment type="interaction">
    <interactant intactId="EBI-740282">
        <id>Q9NVF7</id>
    </interactant>
    <interactant intactId="EBI-359720">
        <id>P17980</id>
        <label>PSMC3</label>
    </interactant>
    <organismsDiffer>false</organismsDiffer>
    <experiments>6</experiments>
</comment>
<comment type="interaction">
    <interactant intactId="EBI-740282">
        <id>Q9NVF7</id>
    </interactant>
    <interactant intactId="EBI-742426">
        <id>Q9H190</id>
        <label>SDCBP2</label>
    </interactant>
    <organismsDiffer>false</organismsDiffer>
    <experiments>6</experiments>
</comment>
<comment type="interaction">
    <interactant intactId="EBI-740282">
        <id>Q9NVF7</id>
    </interactant>
    <interactant intactId="EBI-307486">
        <id>P63208</id>
        <label>SKP1</label>
    </interactant>
    <organismsDiffer>false</organismsDiffer>
    <experiments>14</experiments>
</comment>
<comment type="interaction">
    <interactant intactId="EBI-740282">
        <id>Q9NVF7</id>
    </interactant>
    <interactant intactId="EBI-413317">
        <id>Q96R06</id>
        <label>SPAG5</label>
    </interactant>
    <organismsDiffer>false</organismsDiffer>
    <experiments>3</experiments>
</comment>
<comment type="interaction">
    <interactant intactId="EBI-740282">
        <id>Q9NVF7</id>
    </interactant>
    <interactant intactId="EBI-9071709">
        <id>P61266</id>
        <label>STX1B</label>
    </interactant>
    <organismsDiffer>false</organismsDiffer>
    <experiments>5</experiments>
</comment>
<comment type="interaction">
    <interactant intactId="EBI-740282">
        <id>Q9NVF7</id>
    </interactant>
    <interactant intactId="EBI-355744">
        <id>Q12933</id>
        <label>TRAF2</label>
    </interactant>
    <organismsDiffer>false</organismsDiffer>
    <experiments>9</experiments>
</comment>
<comment type="interaction">
    <interactant intactId="EBI-740282">
        <id>Q9NVF7</id>
    </interactant>
    <interactant intactId="EBI-523498">
        <id>O00463</id>
        <label>TRAF5</label>
    </interactant>
    <organismsDiffer>false</organismsDiffer>
    <experiments>6</experiments>
</comment>
<comment type="subcellular location">
    <subcellularLocation>
        <location evidence="4">Chromosome</location>
        <location evidence="4">Centromere</location>
        <location evidence="4">Kinetochore</location>
    </subcellularLocation>
</comment>
<comment type="alternative products">
    <event type="alternative splicing"/>
    <isoform>
        <id>Q9NVF7-1</id>
        <name>1</name>
        <sequence type="displayed"/>
    </isoform>
    <isoform>
        <id>Q9NVF7-2</id>
        <name>2</name>
        <sequence type="described" ref="VSP_047265 VSP_047266"/>
    </isoform>
</comment>
<comment type="disease" evidence="6">
    <disease id="DI-06361">
        <name>Developmental and epileptic encephalopathy 100</name>
        <acronym>DEE100</acronym>
        <description>A form of epileptic encephalopathy, a heterogeneous group of early-onset epilepsies characterized by refractory seizures, neurodevelopmental impairment, and poor prognosis. Development is normal prior to seizure onset, after which cognitive and motor delays become apparent. DEE100 is an autosomal dominant, severe form characterized by global developmental delay and onset of variable types of seizures in the first months or years of life.</description>
        <dbReference type="MIM" id="619777"/>
    </disease>
    <text>The disease is caused by variants affecting the gene represented in this entry.</text>
</comment>
<evidence type="ECO:0000250" key="1"/>
<evidence type="ECO:0000255" key="2">
    <source>
        <dbReference type="PROSITE-ProRule" id="PRU00080"/>
    </source>
</evidence>
<evidence type="ECO:0000256" key="3">
    <source>
        <dbReference type="SAM" id="MobiDB-lite"/>
    </source>
</evidence>
<evidence type="ECO:0000269" key="4">
    <source>
    </source>
</evidence>
<evidence type="ECO:0000269" key="5">
    <source>
    </source>
</evidence>
<evidence type="ECO:0000269" key="6">
    <source>
    </source>
</evidence>
<evidence type="ECO:0000303" key="7">
    <source>
    </source>
</evidence>
<evidence type="ECO:0000305" key="8"/>
<evidence type="ECO:0007744" key="9">
    <source>
    </source>
</evidence>
<evidence type="ECO:0007744" key="10">
    <source>
    </source>
</evidence>
<evidence type="ECO:0007744" key="11">
    <source>
    </source>
</evidence>
<evidence type="ECO:0007744" key="12">
    <source>
    </source>
</evidence>
<evidence type="ECO:0007744" key="13">
    <source>
    </source>
</evidence>
<evidence type="ECO:0007744" key="14">
    <source>
    </source>
</evidence>
<keyword id="KW-0025">Alternative splicing</keyword>
<keyword id="KW-0137">Centromere</keyword>
<keyword id="KW-0158">Chromosome</keyword>
<keyword id="KW-0225">Disease variant</keyword>
<keyword id="KW-0887">Epilepsy</keyword>
<keyword id="KW-0991">Intellectual disability</keyword>
<keyword id="KW-0995">Kinetochore</keyword>
<keyword id="KW-0597">Phosphoprotein</keyword>
<keyword id="KW-1267">Proteomics identification</keyword>
<keyword id="KW-1185">Reference proteome</keyword>
<keyword id="KW-0833">Ubl conjugation pathway</keyword>
<organism>
    <name type="scientific">Homo sapiens</name>
    <name type="common">Human</name>
    <dbReference type="NCBI Taxonomy" id="9606"/>
    <lineage>
        <taxon>Eukaryota</taxon>
        <taxon>Metazoa</taxon>
        <taxon>Chordata</taxon>
        <taxon>Craniata</taxon>
        <taxon>Vertebrata</taxon>
        <taxon>Euteleostomi</taxon>
        <taxon>Mammalia</taxon>
        <taxon>Eutheria</taxon>
        <taxon>Euarchontoglires</taxon>
        <taxon>Primates</taxon>
        <taxon>Haplorrhini</taxon>
        <taxon>Catarrhini</taxon>
        <taxon>Hominidae</taxon>
        <taxon>Homo</taxon>
    </lineage>
</organism>
<dbReference type="EMBL" id="AK001628">
    <property type="protein sequence ID" value="BAA91795.1"/>
    <property type="molecule type" value="mRNA"/>
</dbReference>
<dbReference type="EMBL" id="AL390122">
    <property type="status" value="NOT_ANNOTATED_CDS"/>
    <property type="molecule type" value="Genomic_DNA"/>
</dbReference>
<dbReference type="EMBL" id="BC031576">
    <property type="protein sequence ID" value="AAH31576.1"/>
    <property type="molecule type" value="mRNA"/>
</dbReference>
<dbReference type="EMBL" id="AB007952">
    <property type="protein sequence ID" value="BAA32327.1"/>
    <property type="molecule type" value="mRNA"/>
</dbReference>
<dbReference type="CCDS" id="CCDS1539.1">
    <molecule id="Q9NVF7-1"/>
</dbReference>
<dbReference type="CCDS" id="CCDS44320.1">
    <molecule id="Q9NVF7-2"/>
</dbReference>
<dbReference type="RefSeq" id="NP_001129587.1">
    <molecule id="Q9NVF7-2"/>
    <property type="nucleotide sequence ID" value="NM_001136115.3"/>
</dbReference>
<dbReference type="RefSeq" id="NP_055991.1">
    <molecule id="Q9NVF7-1"/>
    <property type="nucleotide sequence ID" value="NM_015176.4"/>
</dbReference>
<dbReference type="SMR" id="Q9NVF7"/>
<dbReference type="BioGRID" id="116826">
    <property type="interactions" value="109"/>
</dbReference>
<dbReference type="ComplexPortal" id="CPX-7967">
    <property type="entry name" value="SCF E3 ubiquitin ligase complex, FBXO28 variant"/>
</dbReference>
<dbReference type="DIP" id="DIP-56683N"/>
<dbReference type="FunCoup" id="Q9NVF7">
    <property type="interactions" value="1351"/>
</dbReference>
<dbReference type="IntAct" id="Q9NVF7">
    <property type="interactions" value="87"/>
</dbReference>
<dbReference type="MINT" id="Q9NVF7"/>
<dbReference type="STRING" id="9606.ENSP00000355827"/>
<dbReference type="iPTMnet" id="Q9NVF7"/>
<dbReference type="PhosphoSitePlus" id="Q9NVF7"/>
<dbReference type="BioMuta" id="FBXO28"/>
<dbReference type="DMDM" id="59797970"/>
<dbReference type="jPOST" id="Q9NVF7"/>
<dbReference type="MassIVE" id="Q9NVF7"/>
<dbReference type="PaxDb" id="9606-ENSP00000355827"/>
<dbReference type="PeptideAtlas" id="Q9NVF7"/>
<dbReference type="ProteomicsDB" id="19924"/>
<dbReference type="ProteomicsDB" id="82789">
    <molecule id="Q9NVF7-1"/>
</dbReference>
<dbReference type="Pumba" id="Q9NVF7"/>
<dbReference type="Antibodypedia" id="34636">
    <property type="antibodies" value="185 antibodies from 27 providers"/>
</dbReference>
<dbReference type="DNASU" id="23219"/>
<dbReference type="Ensembl" id="ENST00000366862.10">
    <molecule id="Q9NVF7-1"/>
    <property type="protein sequence ID" value="ENSP00000355827.5"/>
    <property type="gene ID" value="ENSG00000143756.12"/>
</dbReference>
<dbReference type="Ensembl" id="ENST00000424254.6">
    <molecule id="Q9NVF7-2"/>
    <property type="protein sequence ID" value="ENSP00000416888.2"/>
    <property type="gene ID" value="ENSG00000143756.12"/>
</dbReference>
<dbReference type="GeneID" id="23219"/>
<dbReference type="KEGG" id="hsa:23219"/>
<dbReference type="MANE-Select" id="ENST00000366862.10">
    <property type="protein sequence ID" value="ENSP00000355827.5"/>
    <property type="RefSeq nucleotide sequence ID" value="NM_015176.4"/>
    <property type="RefSeq protein sequence ID" value="NP_055991.1"/>
</dbReference>
<dbReference type="UCSC" id="uc001hoh.3">
    <molecule id="Q9NVF7-1"/>
    <property type="organism name" value="human"/>
</dbReference>
<dbReference type="AGR" id="HGNC:29046"/>
<dbReference type="CTD" id="23219"/>
<dbReference type="DisGeNET" id="23219"/>
<dbReference type="GeneCards" id="FBXO28"/>
<dbReference type="HGNC" id="HGNC:29046">
    <property type="gene designation" value="FBXO28"/>
</dbReference>
<dbReference type="HPA" id="ENSG00000143756">
    <property type="expression patterns" value="Low tissue specificity"/>
</dbReference>
<dbReference type="MalaCards" id="FBXO28"/>
<dbReference type="MIM" id="609100">
    <property type="type" value="gene"/>
</dbReference>
<dbReference type="MIM" id="619777">
    <property type="type" value="phenotype"/>
</dbReference>
<dbReference type="neXtProt" id="NX_Q9NVF7"/>
<dbReference type="OpenTargets" id="ENSG00000143756"/>
<dbReference type="Orphanet" id="442835">
    <property type="disease" value="Non-specific early-onset epileptic encephalopathy"/>
</dbReference>
<dbReference type="PharmGKB" id="PA134876528"/>
<dbReference type="VEuPathDB" id="HostDB:ENSG00000143756"/>
<dbReference type="eggNOG" id="ENOG502QT70">
    <property type="taxonomic scope" value="Eukaryota"/>
</dbReference>
<dbReference type="GeneTree" id="ENSGT00390000002970"/>
<dbReference type="HOGENOM" id="CLU_024146_1_1_1"/>
<dbReference type="InParanoid" id="Q9NVF7"/>
<dbReference type="OMA" id="SSHFPRC"/>
<dbReference type="OrthoDB" id="5860767at2759"/>
<dbReference type="PAN-GO" id="Q9NVF7">
    <property type="GO annotations" value="1 GO annotation based on evolutionary models"/>
</dbReference>
<dbReference type="PhylomeDB" id="Q9NVF7"/>
<dbReference type="TreeFam" id="TF324672"/>
<dbReference type="PathwayCommons" id="Q9NVF7"/>
<dbReference type="SignaLink" id="Q9NVF7"/>
<dbReference type="SIGNOR" id="Q9NVF7"/>
<dbReference type="BioGRID-ORCS" id="23219">
    <property type="hits" value="56 hits in 1200 CRISPR screens"/>
</dbReference>
<dbReference type="ChiTaRS" id="FBXO28">
    <property type="organism name" value="human"/>
</dbReference>
<dbReference type="GeneWiki" id="FBXO28"/>
<dbReference type="GenomeRNAi" id="23219"/>
<dbReference type="Pharos" id="Q9NVF7">
    <property type="development level" value="Tbio"/>
</dbReference>
<dbReference type="PRO" id="PR:Q9NVF7"/>
<dbReference type="Proteomes" id="UP000005640">
    <property type="component" value="Chromosome 1"/>
</dbReference>
<dbReference type="RNAct" id="Q9NVF7">
    <property type="molecule type" value="protein"/>
</dbReference>
<dbReference type="Bgee" id="ENSG00000143756">
    <property type="expression patterns" value="Expressed in hair follicle and 203 other cell types or tissues"/>
</dbReference>
<dbReference type="ExpressionAtlas" id="Q9NVF7">
    <property type="expression patterns" value="baseline and differential"/>
</dbReference>
<dbReference type="GO" id="GO:0000776">
    <property type="term" value="C:kinetochore"/>
    <property type="evidence" value="ECO:0000314"/>
    <property type="project" value="UniProtKB"/>
</dbReference>
<dbReference type="GO" id="GO:0042802">
    <property type="term" value="F:identical protein binding"/>
    <property type="evidence" value="ECO:0000353"/>
    <property type="project" value="IntAct"/>
</dbReference>
<dbReference type="GO" id="GO:0000209">
    <property type="term" value="P:protein polyubiquitination"/>
    <property type="evidence" value="ECO:0000318"/>
    <property type="project" value="GO_Central"/>
</dbReference>
<dbReference type="CDD" id="cd22100">
    <property type="entry name" value="F-box_FBXO28"/>
    <property type="match status" value="1"/>
</dbReference>
<dbReference type="InterPro" id="IPR036047">
    <property type="entry name" value="F-box-like_dom_sf"/>
</dbReference>
<dbReference type="InterPro" id="IPR001810">
    <property type="entry name" value="F-box_dom"/>
</dbReference>
<dbReference type="InterPro" id="IPR039719">
    <property type="entry name" value="FBXO28"/>
</dbReference>
<dbReference type="PANTHER" id="PTHR13252">
    <property type="entry name" value="F-BOX ONLY PROTEIN 28"/>
    <property type="match status" value="1"/>
</dbReference>
<dbReference type="PANTHER" id="PTHR13252:SF9">
    <property type="entry name" value="F-BOX ONLY PROTEIN 28"/>
    <property type="match status" value="1"/>
</dbReference>
<dbReference type="Pfam" id="PF00646">
    <property type="entry name" value="F-box"/>
    <property type="match status" value="1"/>
</dbReference>
<dbReference type="SUPFAM" id="SSF81383">
    <property type="entry name" value="F-box domain"/>
    <property type="match status" value="1"/>
</dbReference>
<dbReference type="PROSITE" id="PS50181">
    <property type="entry name" value="FBOX"/>
    <property type="match status" value="1"/>
</dbReference>
<accession>Q9NVF7</accession>
<accession>E9PEM8</accession>
<accession>O75070</accession>
<feature type="chain" id="PRO_0000119917" description="F-box only protein 28">
    <location>
        <begin position="1"/>
        <end position="368"/>
    </location>
</feature>
<feature type="domain" description="F-box" evidence="2">
    <location>
        <begin position="61"/>
        <end position="109"/>
    </location>
</feature>
<feature type="region of interest" description="Disordered" evidence="3">
    <location>
        <begin position="1"/>
        <end position="56"/>
    </location>
</feature>
<feature type="region of interest" description="Disordered" evidence="3">
    <location>
        <begin position="328"/>
        <end position="368"/>
    </location>
</feature>
<feature type="compositionally biased region" description="Basic and acidic residues" evidence="3">
    <location>
        <begin position="1"/>
        <end position="11"/>
    </location>
</feature>
<feature type="compositionally biased region" description="Gly residues" evidence="3">
    <location>
        <begin position="12"/>
        <end position="21"/>
    </location>
</feature>
<feature type="compositionally biased region" description="Low complexity" evidence="3">
    <location>
        <begin position="22"/>
        <end position="31"/>
    </location>
</feature>
<feature type="compositionally biased region" description="Pro residues" evidence="3">
    <location>
        <begin position="32"/>
        <end position="41"/>
    </location>
</feature>
<feature type="compositionally biased region" description="Low complexity" evidence="3">
    <location>
        <begin position="42"/>
        <end position="56"/>
    </location>
</feature>
<feature type="compositionally biased region" description="Low complexity" evidence="3">
    <location>
        <begin position="333"/>
        <end position="342"/>
    </location>
</feature>
<feature type="modified residue" description="Phosphoserine" evidence="10">
    <location>
        <position position="235"/>
    </location>
</feature>
<feature type="modified residue" description="Phosphoserine" evidence="12">
    <location>
        <position position="242"/>
    </location>
</feature>
<feature type="modified residue" description="Phosphothreonine" evidence="12">
    <location>
        <position position="270"/>
    </location>
</feature>
<feature type="modified residue" description="Phosphoserine" evidence="9 10 11 12 13 14">
    <location>
        <position position="344"/>
    </location>
</feature>
<feature type="splice variant" id="VSP_047265" description="In isoform 2." evidence="8">
    <original>VIDEIYR</original>
    <variation>FQDRLQP</variation>
    <location>
        <begin position="173"/>
        <end position="179"/>
    </location>
</feature>
<feature type="splice variant" id="VSP_047266" description="In isoform 2." evidence="8">
    <location>
        <begin position="180"/>
        <end position="368"/>
    </location>
</feature>
<feature type="sequence variant" id="VAR_087015" description="In DEE100; uncertain significance; dbSNP:rs2102604634." evidence="6">
    <original>L</original>
    <variation>R</variation>
    <location>
        <position position="64"/>
    </location>
</feature>
<feature type="sequence variant" id="VAR_087016" description="In DEE100; uncertain significance." evidence="6">
    <original>A</original>
    <variation>P</variation>
    <location>
        <position position="66"/>
    </location>
</feature>
<feature type="sequence variant" id="VAR_064713" description="Found in a renal cell carcinoma case; somatic mutation." evidence="5">
    <original>P</original>
    <variation>H</variation>
    <location>
        <position position="345"/>
    </location>
</feature>
<feature type="sequence variant" id="VAR_087017" description="In DEE100; dbSNP:rs2102638590." evidence="6">
    <original>R</original>
    <variation>G</variation>
    <location>
        <position position="348"/>
    </location>
</feature>
<feature type="sequence variant" id="VAR_087018" description="In DEE100; dbSNP:rs1553292987." evidence="6">
    <original>R</original>
    <variation>L</variation>
    <location>
        <position position="348"/>
    </location>
</feature>
<feature type="sequence variant" id="VAR_087019" description="In DEE100; uncertain significance." evidence="6">
    <location>
        <begin position="360"/>
        <end position="368"/>
    </location>
</feature>
<protein>
    <recommendedName>
        <fullName>F-box only protein 28</fullName>
    </recommendedName>
</protein>